<sequence length="139" mass="14791">MAMTFHLDVVSAEEQMFSGTVQSIQVSGSEGELGIRPNHAPLLTAIKPGMIRIVKQHGEEEVIYLSGGVLEVQPGAVTVLADTAIRGSDLDEARALEAKRKAEAHMNSSHGDVDFAVASAELAKAIAKLRVIELTKNAM</sequence>
<feature type="chain" id="PRO_1000127857" description="ATP synthase epsilon chain">
    <location>
        <begin position="1"/>
        <end position="139"/>
    </location>
</feature>
<evidence type="ECO:0000255" key="1">
    <source>
        <dbReference type="HAMAP-Rule" id="MF_00530"/>
    </source>
</evidence>
<name>ATPE_ERWT9</name>
<accession>B2VCA3</accession>
<organism>
    <name type="scientific">Erwinia tasmaniensis (strain DSM 17950 / CFBP 7177 / CIP 109463 / NCPPB 4357 / Et1/99)</name>
    <dbReference type="NCBI Taxonomy" id="465817"/>
    <lineage>
        <taxon>Bacteria</taxon>
        <taxon>Pseudomonadati</taxon>
        <taxon>Pseudomonadota</taxon>
        <taxon>Gammaproteobacteria</taxon>
        <taxon>Enterobacterales</taxon>
        <taxon>Erwiniaceae</taxon>
        <taxon>Erwinia</taxon>
    </lineage>
</organism>
<proteinExistence type="inferred from homology"/>
<reference key="1">
    <citation type="journal article" date="2008" name="Environ. Microbiol.">
        <title>The genome of Erwinia tasmaniensis strain Et1/99, a non-pathogenic bacterium in the genus Erwinia.</title>
        <authorList>
            <person name="Kube M."/>
            <person name="Migdoll A.M."/>
            <person name="Mueller I."/>
            <person name="Kuhl H."/>
            <person name="Beck A."/>
            <person name="Reinhardt R."/>
            <person name="Geider K."/>
        </authorList>
    </citation>
    <scope>NUCLEOTIDE SEQUENCE [LARGE SCALE GENOMIC DNA]</scope>
    <source>
        <strain>DSM 17950 / CFBP 7177 / CIP 109463 / NCPPB 4357 / Et1/99</strain>
    </source>
</reference>
<protein>
    <recommendedName>
        <fullName evidence="1">ATP synthase epsilon chain</fullName>
    </recommendedName>
    <alternativeName>
        <fullName evidence="1">ATP synthase F1 sector epsilon subunit</fullName>
    </alternativeName>
    <alternativeName>
        <fullName evidence="1">F-ATPase epsilon subunit</fullName>
    </alternativeName>
</protein>
<dbReference type="EMBL" id="CU468135">
    <property type="protein sequence ID" value="CAO98520.1"/>
    <property type="molecule type" value="Genomic_DNA"/>
</dbReference>
<dbReference type="RefSeq" id="WP_012443140.1">
    <property type="nucleotide sequence ID" value="NC_010694.1"/>
</dbReference>
<dbReference type="SMR" id="B2VCA3"/>
<dbReference type="STRING" id="465817.ETA_34740"/>
<dbReference type="KEGG" id="eta:ETA_34740"/>
<dbReference type="eggNOG" id="COG0355">
    <property type="taxonomic scope" value="Bacteria"/>
</dbReference>
<dbReference type="HOGENOM" id="CLU_084338_2_0_6"/>
<dbReference type="OrthoDB" id="9791445at2"/>
<dbReference type="Proteomes" id="UP000001726">
    <property type="component" value="Chromosome"/>
</dbReference>
<dbReference type="GO" id="GO:0005886">
    <property type="term" value="C:plasma membrane"/>
    <property type="evidence" value="ECO:0007669"/>
    <property type="project" value="UniProtKB-SubCell"/>
</dbReference>
<dbReference type="GO" id="GO:0045259">
    <property type="term" value="C:proton-transporting ATP synthase complex"/>
    <property type="evidence" value="ECO:0007669"/>
    <property type="project" value="UniProtKB-KW"/>
</dbReference>
<dbReference type="GO" id="GO:0005524">
    <property type="term" value="F:ATP binding"/>
    <property type="evidence" value="ECO:0007669"/>
    <property type="project" value="UniProtKB-UniRule"/>
</dbReference>
<dbReference type="GO" id="GO:0046933">
    <property type="term" value="F:proton-transporting ATP synthase activity, rotational mechanism"/>
    <property type="evidence" value="ECO:0007669"/>
    <property type="project" value="UniProtKB-UniRule"/>
</dbReference>
<dbReference type="CDD" id="cd12152">
    <property type="entry name" value="F1-ATPase_delta"/>
    <property type="match status" value="1"/>
</dbReference>
<dbReference type="FunFam" id="1.20.5.440:FF:000001">
    <property type="entry name" value="ATP synthase epsilon chain"/>
    <property type="match status" value="1"/>
</dbReference>
<dbReference type="FunFam" id="2.60.15.10:FF:000001">
    <property type="entry name" value="ATP synthase epsilon chain"/>
    <property type="match status" value="1"/>
</dbReference>
<dbReference type="Gene3D" id="1.20.5.440">
    <property type="entry name" value="ATP synthase delta/epsilon subunit, C-terminal domain"/>
    <property type="match status" value="1"/>
</dbReference>
<dbReference type="Gene3D" id="2.60.15.10">
    <property type="entry name" value="F0F1 ATP synthase delta/epsilon subunit, N-terminal"/>
    <property type="match status" value="1"/>
</dbReference>
<dbReference type="HAMAP" id="MF_00530">
    <property type="entry name" value="ATP_synth_epsil_bac"/>
    <property type="match status" value="1"/>
</dbReference>
<dbReference type="InterPro" id="IPR036794">
    <property type="entry name" value="ATP_F1_dsu/esu_C_sf"/>
</dbReference>
<dbReference type="InterPro" id="IPR001469">
    <property type="entry name" value="ATP_synth_F1_dsu/esu"/>
</dbReference>
<dbReference type="InterPro" id="IPR020546">
    <property type="entry name" value="ATP_synth_F1_dsu/esu_N"/>
</dbReference>
<dbReference type="InterPro" id="IPR020547">
    <property type="entry name" value="ATP_synth_F1_esu_C"/>
</dbReference>
<dbReference type="InterPro" id="IPR036771">
    <property type="entry name" value="ATPsynth_dsu/esu_N"/>
</dbReference>
<dbReference type="NCBIfam" id="TIGR01216">
    <property type="entry name" value="ATP_synt_epsi"/>
    <property type="match status" value="1"/>
</dbReference>
<dbReference type="NCBIfam" id="NF001847">
    <property type="entry name" value="PRK00571.1-4"/>
    <property type="match status" value="1"/>
</dbReference>
<dbReference type="PANTHER" id="PTHR13822">
    <property type="entry name" value="ATP SYNTHASE DELTA/EPSILON CHAIN"/>
    <property type="match status" value="1"/>
</dbReference>
<dbReference type="PANTHER" id="PTHR13822:SF10">
    <property type="entry name" value="ATP SYNTHASE EPSILON CHAIN, CHLOROPLASTIC"/>
    <property type="match status" value="1"/>
</dbReference>
<dbReference type="Pfam" id="PF00401">
    <property type="entry name" value="ATP-synt_DE"/>
    <property type="match status" value="1"/>
</dbReference>
<dbReference type="Pfam" id="PF02823">
    <property type="entry name" value="ATP-synt_DE_N"/>
    <property type="match status" value="1"/>
</dbReference>
<dbReference type="SUPFAM" id="SSF46604">
    <property type="entry name" value="Epsilon subunit of F1F0-ATP synthase C-terminal domain"/>
    <property type="match status" value="1"/>
</dbReference>
<dbReference type="SUPFAM" id="SSF51344">
    <property type="entry name" value="Epsilon subunit of F1F0-ATP synthase N-terminal domain"/>
    <property type="match status" value="1"/>
</dbReference>
<gene>
    <name evidence="1" type="primary">atpC</name>
    <name type="ordered locus">ETA_34740</name>
</gene>
<comment type="function">
    <text evidence="1">Produces ATP from ADP in the presence of a proton gradient across the membrane.</text>
</comment>
<comment type="subunit">
    <text evidence="1">F-type ATPases have 2 components, CF(1) - the catalytic core - and CF(0) - the membrane proton channel. CF(1) has five subunits: alpha(3), beta(3), gamma(1), delta(1), epsilon(1). CF(0) has three main subunits: a, b and c.</text>
</comment>
<comment type="subcellular location">
    <subcellularLocation>
        <location evidence="1">Cell inner membrane</location>
        <topology evidence="1">Peripheral membrane protein</topology>
    </subcellularLocation>
</comment>
<comment type="similarity">
    <text evidence="1">Belongs to the ATPase epsilon chain family.</text>
</comment>
<keyword id="KW-0066">ATP synthesis</keyword>
<keyword id="KW-0997">Cell inner membrane</keyword>
<keyword id="KW-1003">Cell membrane</keyword>
<keyword id="KW-0139">CF(1)</keyword>
<keyword id="KW-0375">Hydrogen ion transport</keyword>
<keyword id="KW-0406">Ion transport</keyword>
<keyword id="KW-0472">Membrane</keyword>
<keyword id="KW-1185">Reference proteome</keyword>
<keyword id="KW-0813">Transport</keyword>